<sequence length="428" mass="47788">MTQVFQKVSAIRGMNDVLPGPSARWEKFEEIVRGWLRSYGYRNVRTPVLEHTRLFARGIGEVTDIVEKEMYTFTDALNGDSLTMRPEMTAGIVRASIEHNMLYDRPHRVYAIGPVFRHERPQRGRYRQFHQIDVEALGFAGPDVDAEMIVMLARLWKLLGLQDVRLELNSLGQPAERAAHRAALIEHLERHQDILDEDGRRRMYSNPLRVLDTKNPAMQEMADSAPRLFDFLGEESRSHFDGLCQRLADAGIEYRLNPRLVRGLDYYNLTVFEWVTDRLGAQGTVCGGGRYDGLVELLGGKPAPAVGFAIGMERLLDLWEQSVEIEQPAECEVYIVHQGEEGQRLAARVGEQLRDAGLDVIVHAGAAGFKAQFKRADASGARIAVILGGDEVASRTASIKHLRGPVGADAAQQQVPLAQLADVLKSKG</sequence>
<feature type="chain" id="PRO_0000136118" description="Histidine--tRNA ligase">
    <location>
        <begin position="1"/>
        <end position="428"/>
    </location>
</feature>
<reference key="1">
    <citation type="journal article" date="2003" name="Nat. Genet.">
        <title>Comparative analysis of the genome sequences of Bordetella pertussis, Bordetella parapertussis and Bordetella bronchiseptica.</title>
        <authorList>
            <person name="Parkhill J."/>
            <person name="Sebaihia M."/>
            <person name="Preston A."/>
            <person name="Murphy L.D."/>
            <person name="Thomson N.R."/>
            <person name="Harris D.E."/>
            <person name="Holden M.T.G."/>
            <person name="Churcher C.M."/>
            <person name="Bentley S.D."/>
            <person name="Mungall K.L."/>
            <person name="Cerdeno-Tarraga A.-M."/>
            <person name="Temple L."/>
            <person name="James K.D."/>
            <person name="Harris B."/>
            <person name="Quail M.A."/>
            <person name="Achtman M."/>
            <person name="Atkin R."/>
            <person name="Baker S."/>
            <person name="Basham D."/>
            <person name="Bason N."/>
            <person name="Cherevach I."/>
            <person name="Chillingworth T."/>
            <person name="Collins M."/>
            <person name="Cronin A."/>
            <person name="Davis P."/>
            <person name="Doggett J."/>
            <person name="Feltwell T."/>
            <person name="Goble A."/>
            <person name="Hamlin N."/>
            <person name="Hauser H."/>
            <person name="Holroyd S."/>
            <person name="Jagels K."/>
            <person name="Leather S."/>
            <person name="Moule S."/>
            <person name="Norberczak H."/>
            <person name="O'Neil S."/>
            <person name="Ormond D."/>
            <person name="Price C."/>
            <person name="Rabbinowitsch E."/>
            <person name="Rutter S."/>
            <person name="Sanders M."/>
            <person name="Saunders D."/>
            <person name="Seeger K."/>
            <person name="Sharp S."/>
            <person name="Simmonds M."/>
            <person name="Skelton J."/>
            <person name="Squares R."/>
            <person name="Squares S."/>
            <person name="Stevens K."/>
            <person name="Unwin L."/>
            <person name="Whitehead S."/>
            <person name="Barrell B.G."/>
            <person name="Maskell D.J."/>
        </authorList>
    </citation>
    <scope>NUCLEOTIDE SEQUENCE [LARGE SCALE GENOMIC DNA]</scope>
    <source>
        <strain>12822 / ATCC BAA-587 / NCTC 13253</strain>
    </source>
</reference>
<proteinExistence type="inferred from homology"/>
<dbReference type="EC" id="6.1.1.21" evidence="1"/>
<dbReference type="EMBL" id="BX640431">
    <property type="protein sequence ID" value="CAE38146.1"/>
    <property type="status" value="ALT_INIT"/>
    <property type="molecule type" value="Genomic_DNA"/>
</dbReference>
<dbReference type="RefSeq" id="WP_010926751.1">
    <property type="nucleotide sequence ID" value="NC_002928.3"/>
</dbReference>
<dbReference type="SMR" id="Q7W6P7"/>
<dbReference type="GeneID" id="93204641"/>
<dbReference type="KEGG" id="bpa:BPP2854"/>
<dbReference type="HOGENOM" id="CLU_025113_1_1_4"/>
<dbReference type="Proteomes" id="UP000001421">
    <property type="component" value="Chromosome"/>
</dbReference>
<dbReference type="GO" id="GO:0005737">
    <property type="term" value="C:cytoplasm"/>
    <property type="evidence" value="ECO:0007669"/>
    <property type="project" value="UniProtKB-SubCell"/>
</dbReference>
<dbReference type="GO" id="GO:0005524">
    <property type="term" value="F:ATP binding"/>
    <property type="evidence" value="ECO:0007669"/>
    <property type="project" value="UniProtKB-UniRule"/>
</dbReference>
<dbReference type="GO" id="GO:0004821">
    <property type="term" value="F:histidine-tRNA ligase activity"/>
    <property type="evidence" value="ECO:0007669"/>
    <property type="project" value="UniProtKB-UniRule"/>
</dbReference>
<dbReference type="GO" id="GO:0006427">
    <property type="term" value="P:histidyl-tRNA aminoacylation"/>
    <property type="evidence" value="ECO:0007669"/>
    <property type="project" value="UniProtKB-UniRule"/>
</dbReference>
<dbReference type="CDD" id="cd00773">
    <property type="entry name" value="HisRS-like_core"/>
    <property type="match status" value="1"/>
</dbReference>
<dbReference type="CDD" id="cd00859">
    <property type="entry name" value="HisRS_anticodon"/>
    <property type="match status" value="1"/>
</dbReference>
<dbReference type="FunFam" id="3.30.930.10:FF:000005">
    <property type="entry name" value="Histidine--tRNA ligase"/>
    <property type="match status" value="1"/>
</dbReference>
<dbReference type="Gene3D" id="3.40.50.800">
    <property type="entry name" value="Anticodon-binding domain"/>
    <property type="match status" value="1"/>
</dbReference>
<dbReference type="Gene3D" id="3.30.930.10">
    <property type="entry name" value="Bira Bifunctional Protein, Domain 2"/>
    <property type="match status" value="1"/>
</dbReference>
<dbReference type="HAMAP" id="MF_00127">
    <property type="entry name" value="His_tRNA_synth"/>
    <property type="match status" value="1"/>
</dbReference>
<dbReference type="InterPro" id="IPR006195">
    <property type="entry name" value="aa-tRNA-synth_II"/>
</dbReference>
<dbReference type="InterPro" id="IPR045864">
    <property type="entry name" value="aa-tRNA-synth_II/BPL/LPL"/>
</dbReference>
<dbReference type="InterPro" id="IPR004154">
    <property type="entry name" value="Anticodon-bd"/>
</dbReference>
<dbReference type="InterPro" id="IPR036621">
    <property type="entry name" value="Anticodon-bd_dom_sf"/>
</dbReference>
<dbReference type="InterPro" id="IPR015807">
    <property type="entry name" value="His-tRNA-ligase"/>
</dbReference>
<dbReference type="InterPro" id="IPR041715">
    <property type="entry name" value="HisRS-like_core"/>
</dbReference>
<dbReference type="InterPro" id="IPR004516">
    <property type="entry name" value="HisRS/HisZ"/>
</dbReference>
<dbReference type="InterPro" id="IPR033656">
    <property type="entry name" value="HisRS_anticodon"/>
</dbReference>
<dbReference type="NCBIfam" id="TIGR00442">
    <property type="entry name" value="hisS"/>
    <property type="match status" value="1"/>
</dbReference>
<dbReference type="PANTHER" id="PTHR43707:SF1">
    <property type="entry name" value="HISTIDINE--TRNA LIGASE, MITOCHONDRIAL-RELATED"/>
    <property type="match status" value="1"/>
</dbReference>
<dbReference type="PANTHER" id="PTHR43707">
    <property type="entry name" value="HISTIDYL-TRNA SYNTHETASE"/>
    <property type="match status" value="1"/>
</dbReference>
<dbReference type="Pfam" id="PF03129">
    <property type="entry name" value="HGTP_anticodon"/>
    <property type="match status" value="1"/>
</dbReference>
<dbReference type="Pfam" id="PF13393">
    <property type="entry name" value="tRNA-synt_His"/>
    <property type="match status" value="1"/>
</dbReference>
<dbReference type="PIRSF" id="PIRSF001549">
    <property type="entry name" value="His-tRNA_synth"/>
    <property type="match status" value="1"/>
</dbReference>
<dbReference type="SUPFAM" id="SSF52954">
    <property type="entry name" value="Class II aaRS ABD-related"/>
    <property type="match status" value="1"/>
</dbReference>
<dbReference type="SUPFAM" id="SSF55681">
    <property type="entry name" value="Class II aaRS and biotin synthetases"/>
    <property type="match status" value="1"/>
</dbReference>
<dbReference type="PROSITE" id="PS50862">
    <property type="entry name" value="AA_TRNA_LIGASE_II"/>
    <property type="match status" value="1"/>
</dbReference>
<comment type="catalytic activity">
    <reaction evidence="1">
        <text>tRNA(His) + L-histidine + ATP = L-histidyl-tRNA(His) + AMP + diphosphate + H(+)</text>
        <dbReference type="Rhea" id="RHEA:17313"/>
        <dbReference type="Rhea" id="RHEA-COMP:9665"/>
        <dbReference type="Rhea" id="RHEA-COMP:9689"/>
        <dbReference type="ChEBI" id="CHEBI:15378"/>
        <dbReference type="ChEBI" id="CHEBI:30616"/>
        <dbReference type="ChEBI" id="CHEBI:33019"/>
        <dbReference type="ChEBI" id="CHEBI:57595"/>
        <dbReference type="ChEBI" id="CHEBI:78442"/>
        <dbReference type="ChEBI" id="CHEBI:78527"/>
        <dbReference type="ChEBI" id="CHEBI:456215"/>
        <dbReference type="EC" id="6.1.1.21"/>
    </reaction>
</comment>
<comment type="subunit">
    <text evidence="1">Homodimer.</text>
</comment>
<comment type="subcellular location">
    <subcellularLocation>
        <location evidence="1">Cytoplasm</location>
    </subcellularLocation>
</comment>
<comment type="similarity">
    <text evidence="1">Belongs to the class-II aminoacyl-tRNA synthetase family.</text>
</comment>
<comment type="sequence caution" evidence="2">
    <conflict type="erroneous initiation">
        <sequence resource="EMBL-CDS" id="CAE38146"/>
    </conflict>
</comment>
<protein>
    <recommendedName>
        <fullName evidence="1">Histidine--tRNA ligase</fullName>
        <ecNumber evidence="1">6.1.1.21</ecNumber>
    </recommendedName>
    <alternativeName>
        <fullName evidence="1">Histidyl-tRNA synthetase</fullName>
        <shortName evidence="1">HisRS</shortName>
    </alternativeName>
</protein>
<name>SYH_BORPA</name>
<accession>Q7W6P7</accession>
<keyword id="KW-0030">Aminoacyl-tRNA synthetase</keyword>
<keyword id="KW-0067">ATP-binding</keyword>
<keyword id="KW-0963">Cytoplasm</keyword>
<keyword id="KW-0436">Ligase</keyword>
<keyword id="KW-0547">Nucleotide-binding</keyword>
<keyword id="KW-0648">Protein biosynthesis</keyword>
<gene>
    <name evidence="1" type="primary">hisS</name>
    <name type="ordered locus">BPP2854</name>
</gene>
<organism>
    <name type="scientific">Bordetella parapertussis (strain 12822 / ATCC BAA-587 / NCTC 13253)</name>
    <dbReference type="NCBI Taxonomy" id="257311"/>
    <lineage>
        <taxon>Bacteria</taxon>
        <taxon>Pseudomonadati</taxon>
        <taxon>Pseudomonadota</taxon>
        <taxon>Betaproteobacteria</taxon>
        <taxon>Burkholderiales</taxon>
        <taxon>Alcaligenaceae</taxon>
        <taxon>Bordetella</taxon>
    </lineage>
</organism>
<evidence type="ECO:0000255" key="1">
    <source>
        <dbReference type="HAMAP-Rule" id="MF_00127"/>
    </source>
</evidence>
<evidence type="ECO:0000305" key="2"/>